<feature type="chain" id="PRO_1000034289" description="Transcription elongation factor GreA">
    <location>
        <begin position="1"/>
        <end position="160"/>
    </location>
</feature>
<feature type="coiled-coil region" evidence="1">
    <location>
        <begin position="49"/>
        <end position="73"/>
    </location>
</feature>
<sequence length="160" mass="17535">MEKVPMTANGYAALQVELKQRQTVDRPRIIEHIAEARSHGDLSENAEYHAAKEEQSHNEGRIADLEDKLARADVIDITKLSGDTIMFGATVTLVDEDTEKKAVWQIVGEPEADAKKGRISITSPLARALIGKKKGASVEVMAPGGAKAYEITKVEWREPS</sequence>
<dbReference type="EMBL" id="CP000463">
    <property type="protein sequence ID" value="ABJ07887.1"/>
    <property type="molecule type" value="Genomic_DNA"/>
</dbReference>
<dbReference type="SMR" id="Q07JJ7"/>
<dbReference type="STRING" id="316055.RPE_3961"/>
<dbReference type="KEGG" id="rpe:RPE_3961"/>
<dbReference type="eggNOG" id="COG0782">
    <property type="taxonomic scope" value="Bacteria"/>
</dbReference>
<dbReference type="HOGENOM" id="CLU_101379_2_0_5"/>
<dbReference type="OrthoDB" id="9808774at2"/>
<dbReference type="GO" id="GO:0003677">
    <property type="term" value="F:DNA binding"/>
    <property type="evidence" value="ECO:0007669"/>
    <property type="project" value="UniProtKB-UniRule"/>
</dbReference>
<dbReference type="GO" id="GO:0070063">
    <property type="term" value="F:RNA polymerase binding"/>
    <property type="evidence" value="ECO:0007669"/>
    <property type="project" value="InterPro"/>
</dbReference>
<dbReference type="GO" id="GO:0006354">
    <property type="term" value="P:DNA-templated transcription elongation"/>
    <property type="evidence" value="ECO:0007669"/>
    <property type="project" value="TreeGrafter"/>
</dbReference>
<dbReference type="GO" id="GO:0032784">
    <property type="term" value="P:regulation of DNA-templated transcription elongation"/>
    <property type="evidence" value="ECO:0007669"/>
    <property type="project" value="UniProtKB-UniRule"/>
</dbReference>
<dbReference type="FunFam" id="1.10.287.180:FF:000001">
    <property type="entry name" value="Transcription elongation factor GreA"/>
    <property type="match status" value="1"/>
</dbReference>
<dbReference type="FunFam" id="3.10.50.30:FF:000001">
    <property type="entry name" value="Transcription elongation factor GreA"/>
    <property type="match status" value="1"/>
</dbReference>
<dbReference type="Gene3D" id="3.10.50.30">
    <property type="entry name" value="Transcription elongation factor, GreA/GreB, C-terminal domain"/>
    <property type="match status" value="1"/>
</dbReference>
<dbReference type="Gene3D" id="1.10.287.180">
    <property type="entry name" value="Transcription elongation factor, GreA/GreB, N-terminal domain"/>
    <property type="match status" value="1"/>
</dbReference>
<dbReference type="HAMAP" id="MF_00105">
    <property type="entry name" value="GreA_GreB"/>
    <property type="match status" value="1"/>
</dbReference>
<dbReference type="InterPro" id="IPR036953">
    <property type="entry name" value="GreA/GreB_C_sf"/>
</dbReference>
<dbReference type="InterPro" id="IPR018151">
    <property type="entry name" value="TF_GreA/GreB_CS"/>
</dbReference>
<dbReference type="InterPro" id="IPR006359">
    <property type="entry name" value="Tscrpt_elong_fac_GreA"/>
</dbReference>
<dbReference type="InterPro" id="IPR028624">
    <property type="entry name" value="Tscrpt_elong_fac_GreA/B"/>
</dbReference>
<dbReference type="InterPro" id="IPR001437">
    <property type="entry name" value="Tscrpt_elong_fac_GreA/B_C"/>
</dbReference>
<dbReference type="InterPro" id="IPR023459">
    <property type="entry name" value="Tscrpt_elong_fac_GreA/B_fam"/>
</dbReference>
<dbReference type="InterPro" id="IPR022691">
    <property type="entry name" value="Tscrpt_elong_fac_GreA/B_N"/>
</dbReference>
<dbReference type="InterPro" id="IPR036805">
    <property type="entry name" value="Tscrpt_elong_fac_GreA/B_N_sf"/>
</dbReference>
<dbReference type="NCBIfam" id="TIGR01462">
    <property type="entry name" value="greA"/>
    <property type="match status" value="1"/>
</dbReference>
<dbReference type="NCBIfam" id="NF001261">
    <property type="entry name" value="PRK00226.1-2"/>
    <property type="match status" value="1"/>
</dbReference>
<dbReference type="NCBIfam" id="NF001263">
    <property type="entry name" value="PRK00226.1-4"/>
    <property type="match status" value="1"/>
</dbReference>
<dbReference type="NCBIfam" id="NF001264">
    <property type="entry name" value="PRK00226.1-5"/>
    <property type="match status" value="1"/>
</dbReference>
<dbReference type="PANTHER" id="PTHR30437">
    <property type="entry name" value="TRANSCRIPTION ELONGATION FACTOR GREA"/>
    <property type="match status" value="1"/>
</dbReference>
<dbReference type="PANTHER" id="PTHR30437:SF4">
    <property type="entry name" value="TRANSCRIPTION ELONGATION FACTOR GREA"/>
    <property type="match status" value="1"/>
</dbReference>
<dbReference type="Pfam" id="PF01272">
    <property type="entry name" value="GreA_GreB"/>
    <property type="match status" value="1"/>
</dbReference>
<dbReference type="Pfam" id="PF03449">
    <property type="entry name" value="GreA_GreB_N"/>
    <property type="match status" value="1"/>
</dbReference>
<dbReference type="PIRSF" id="PIRSF006092">
    <property type="entry name" value="GreA_GreB"/>
    <property type="match status" value="1"/>
</dbReference>
<dbReference type="SUPFAM" id="SSF54534">
    <property type="entry name" value="FKBP-like"/>
    <property type="match status" value="1"/>
</dbReference>
<dbReference type="SUPFAM" id="SSF46557">
    <property type="entry name" value="GreA transcript cleavage protein, N-terminal domain"/>
    <property type="match status" value="1"/>
</dbReference>
<dbReference type="PROSITE" id="PS00829">
    <property type="entry name" value="GREAB_1"/>
    <property type="match status" value="1"/>
</dbReference>
<organism>
    <name type="scientific">Rhodopseudomonas palustris (strain BisA53)</name>
    <dbReference type="NCBI Taxonomy" id="316055"/>
    <lineage>
        <taxon>Bacteria</taxon>
        <taxon>Pseudomonadati</taxon>
        <taxon>Pseudomonadota</taxon>
        <taxon>Alphaproteobacteria</taxon>
        <taxon>Hyphomicrobiales</taxon>
        <taxon>Nitrobacteraceae</taxon>
        <taxon>Rhodopseudomonas</taxon>
    </lineage>
</organism>
<gene>
    <name evidence="1" type="primary">greA</name>
    <name type="ordered locus">RPE_3961</name>
</gene>
<keyword id="KW-0175">Coiled coil</keyword>
<keyword id="KW-0238">DNA-binding</keyword>
<keyword id="KW-0804">Transcription</keyword>
<keyword id="KW-0805">Transcription regulation</keyword>
<proteinExistence type="inferred from homology"/>
<protein>
    <recommendedName>
        <fullName evidence="1">Transcription elongation factor GreA</fullName>
    </recommendedName>
    <alternativeName>
        <fullName evidence="1">Transcript cleavage factor GreA</fullName>
    </alternativeName>
</protein>
<name>GREA_RHOP5</name>
<reference key="1">
    <citation type="submission" date="2006-09" db="EMBL/GenBank/DDBJ databases">
        <title>Complete sequence of Rhodopseudomonas palustris BisA53.</title>
        <authorList>
            <consortium name="US DOE Joint Genome Institute"/>
            <person name="Copeland A."/>
            <person name="Lucas S."/>
            <person name="Lapidus A."/>
            <person name="Barry K."/>
            <person name="Detter J.C."/>
            <person name="Glavina del Rio T."/>
            <person name="Hammon N."/>
            <person name="Israni S."/>
            <person name="Dalin E."/>
            <person name="Tice H."/>
            <person name="Pitluck S."/>
            <person name="Chain P."/>
            <person name="Malfatti S."/>
            <person name="Shin M."/>
            <person name="Vergez L."/>
            <person name="Schmutz J."/>
            <person name="Larimer F."/>
            <person name="Land M."/>
            <person name="Hauser L."/>
            <person name="Pelletier D.A."/>
            <person name="Kyrpides N."/>
            <person name="Kim E."/>
            <person name="Harwood C.S."/>
            <person name="Oda Y."/>
            <person name="Richardson P."/>
        </authorList>
    </citation>
    <scope>NUCLEOTIDE SEQUENCE [LARGE SCALE GENOMIC DNA]</scope>
    <source>
        <strain>BisA53</strain>
    </source>
</reference>
<comment type="function">
    <text evidence="1">Necessary for efficient RNA polymerase transcription elongation past template-encoded arresting sites. The arresting sites in DNA have the property of trapping a certain fraction of elongating RNA polymerases that pass through, resulting in locked ternary complexes. Cleavage of the nascent transcript by cleavage factors such as GreA or GreB allows the resumption of elongation from the new 3'terminus. GreA releases sequences of 2 to 3 nucleotides.</text>
</comment>
<comment type="similarity">
    <text evidence="1">Belongs to the GreA/GreB family.</text>
</comment>
<accession>Q07JJ7</accession>
<evidence type="ECO:0000255" key="1">
    <source>
        <dbReference type="HAMAP-Rule" id="MF_00105"/>
    </source>
</evidence>